<reference key="1">
    <citation type="journal article" date="2006" name="Proc. Natl. Acad. Sci. U.S.A.">
        <title>Burkholderia xenovorans LB400 harbors a multi-replicon, 9.73-Mbp genome shaped for versatility.</title>
        <authorList>
            <person name="Chain P.S.G."/>
            <person name="Denef V.J."/>
            <person name="Konstantinidis K.T."/>
            <person name="Vergez L.M."/>
            <person name="Agullo L."/>
            <person name="Reyes V.L."/>
            <person name="Hauser L."/>
            <person name="Cordova M."/>
            <person name="Gomez L."/>
            <person name="Gonzalez M."/>
            <person name="Land M."/>
            <person name="Lao V."/>
            <person name="Larimer F."/>
            <person name="LiPuma J.J."/>
            <person name="Mahenthiralingam E."/>
            <person name="Malfatti S.A."/>
            <person name="Marx C.J."/>
            <person name="Parnell J.J."/>
            <person name="Ramette A."/>
            <person name="Richardson P."/>
            <person name="Seeger M."/>
            <person name="Smith D."/>
            <person name="Spilker T."/>
            <person name="Sul W.J."/>
            <person name="Tsoi T.V."/>
            <person name="Ulrich L.E."/>
            <person name="Zhulin I.B."/>
            <person name="Tiedje J.M."/>
        </authorList>
    </citation>
    <scope>NUCLEOTIDE SEQUENCE [LARGE SCALE GENOMIC DNA]</scope>
    <source>
        <strain>LB400</strain>
    </source>
</reference>
<accession>Q13TG2</accession>
<organism>
    <name type="scientific">Paraburkholderia xenovorans (strain LB400)</name>
    <dbReference type="NCBI Taxonomy" id="266265"/>
    <lineage>
        <taxon>Bacteria</taxon>
        <taxon>Pseudomonadati</taxon>
        <taxon>Pseudomonadota</taxon>
        <taxon>Betaproteobacteria</taxon>
        <taxon>Burkholderiales</taxon>
        <taxon>Burkholderiaceae</taxon>
        <taxon>Paraburkholderia</taxon>
    </lineage>
</organism>
<proteinExistence type="inferred from homology"/>
<sequence length="1368" mass="153056">MQYSFTEKKRIRKSFAKRPIVHQVPFLLATQLESFSTFLQADTSSTQRKPEGLQAAFTSVFPIVSHNGFARLEFVSYMLSPPAFNIKECQQRGLTYCSALRAKVRLVLLDKESPSKPVVKEVKEQEVYMGEIPLMTPTGSFVINGTERVIVSQLHRSPGVFFEHDKGKTHSSGKLLFSARIIPYRGSWLDFEFDPKDVLYFRVDRRRKMPVTILLKAIGLTPEQILANFFVFDNFTLMPEGAQMEFVPERLRGEVARFDITDRDGNVIVQKDKRINAKHIRDLDNAKTKFISVPEDYLLGRVLAKNVVDGDTGEVIANANDEITETVLEKLRESKIKDIQTLYTNDLDQGPYISSTLRIDETADKMAARIAIYRMMRPGEPPTEEAVEALFNRLFYSEDAYDLSKVGRMKFNRRVGRDEIVGPMTLQDDDILATIKILVELRNGKGEVDDIDHLGNRRVRCVGELAENQFRAGLVRVERAVKERLGQAESENLMPHDLINSKPISSAIREFFGSSQLSQFMDQTNPLSEITHKRRVSALGPGGLTRERAGFEVRDVHPTHYGRVCPIETPEGPNIGLINSLALYAHLNEYGFLETPYRKVVDSKVTDQIDYLSAIEEGRYVIAQANAAVAEDGSLTDELVSSREAGETLMVTPDRIQYMDVAPSQIVSVAASLIPFLEHDDANRALMGSNMQRQAVPCLRPEKAVVGTGIERTVAVDSGTTVQAFRGGVVDYVDAGRMVIRVNDDEAVAGDVGVDIYNLIKYTRSNQNTNINQRPIVKVGDIVSRGDVLADGASTDLGELALGQNMLVAFMPWNGYNFEDSILISEKVVADDRYTSIHIEELNVVARDTKLGPEEITRDISNLAEVQLGRLDESGIVYIGAEVEAGDVLVGKVTPKGETQLTPEEKLLRAIFGEKASDVKDTSLRVPSGMSGTVIDVQVFTREGIQRDKRAQQIIDDELKRYRLDLNDQLRIVEGDAFQRLARMLTGKVANGGPKKLAKGTKIEQAYLEDLDHYHWFDIRLADEEAAAQLEAIKDSIEQKRHQFDLAFEEKRKKLTQGDELPPGVLKMVKVYLAVKRRLQPGDKMAGRHGNKGVVSKIVPIEDMPYMADGRPADVVLNPLGVPSRMNVGQVLEVHLGWAAKGLGWRIGEMLQRQAKIAELREFLTKIYNESGRAEELDSFTDDEIVELAKNLREGVPFATPVFDGATEEEMSRALDLAFPDDIAKNLGMTPSKNQVRLYDGRTGEMFERTVTVGYMHYLKLHHLVDDKMHARSTGPYSLVTQQPLGGKAQFGGQRFGEMEVWALEAYGASYVLQEMLTVKSDDVTGRTKVYENLVKGDHVIDAGMPESFNVLVKEIRSLGIDIDLDRN</sequence>
<name>RPOB_PARXL</name>
<feature type="chain" id="PRO_0000300293" description="DNA-directed RNA polymerase subunit beta">
    <location>
        <begin position="1"/>
        <end position="1368"/>
    </location>
</feature>
<keyword id="KW-0240">DNA-directed RNA polymerase</keyword>
<keyword id="KW-0548">Nucleotidyltransferase</keyword>
<keyword id="KW-1185">Reference proteome</keyword>
<keyword id="KW-0804">Transcription</keyword>
<keyword id="KW-0808">Transferase</keyword>
<comment type="function">
    <text evidence="1">DNA-dependent RNA polymerase catalyzes the transcription of DNA into RNA using the four ribonucleoside triphosphates as substrates.</text>
</comment>
<comment type="catalytic activity">
    <reaction evidence="1">
        <text>RNA(n) + a ribonucleoside 5'-triphosphate = RNA(n+1) + diphosphate</text>
        <dbReference type="Rhea" id="RHEA:21248"/>
        <dbReference type="Rhea" id="RHEA-COMP:14527"/>
        <dbReference type="Rhea" id="RHEA-COMP:17342"/>
        <dbReference type="ChEBI" id="CHEBI:33019"/>
        <dbReference type="ChEBI" id="CHEBI:61557"/>
        <dbReference type="ChEBI" id="CHEBI:140395"/>
        <dbReference type="EC" id="2.7.7.6"/>
    </reaction>
</comment>
<comment type="subunit">
    <text evidence="1">The RNAP catalytic core consists of 2 alpha, 1 beta, 1 beta' and 1 omega subunit. When a sigma factor is associated with the core the holoenzyme is formed, which can initiate transcription.</text>
</comment>
<comment type="similarity">
    <text evidence="1">Belongs to the RNA polymerase beta chain family.</text>
</comment>
<gene>
    <name evidence="1" type="primary">rpoB</name>
    <name type="ordered locus">Bxeno_A4089</name>
    <name type="ORF">Bxe_A0306</name>
</gene>
<evidence type="ECO:0000255" key="1">
    <source>
        <dbReference type="HAMAP-Rule" id="MF_01321"/>
    </source>
</evidence>
<protein>
    <recommendedName>
        <fullName evidence="1">DNA-directed RNA polymerase subunit beta</fullName>
        <shortName evidence="1">RNAP subunit beta</shortName>
        <ecNumber evidence="1">2.7.7.6</ecNumber>
    </recommendedName>
    <alternativeName>
        <fullName evidence="1">RNA polymerase subunit beta</fullName>
    </alternativeName>
    <alternativeName>
        <fullName evidence="1">Transcriptase subunit beta</fullName>
    </alternativeName>
</protein>
<dbReference type="EC" id="2.7.7.6" evidence="1"/>
<dbReference type="EMBL" id="CP000270">
    <property type="protein sequence ID" value="ABE32627.1"/>
    <property type="molecule type" value="Genomic_DNA"/>
</dbReference>
<dbReference type="RefSeq" id="WP_011490059.1">
    <property type="nucleotide sequence ID" value="NC_007951.1"/>
</dbReference>
<dbReference type="SMR" id="Q13TG2"/>
<dbReference type="STRING" id="266265.Bxe_A0306"/>
<dbReference type="KEGG" id="bxb:DR64_2476"/>
<dbReference type="KEGG" id="bxe:Bxe_A0306"/>
<dbReference type="PATRIC" id="fig|266265.5.peg.4320"/>
<dbReference type="eggNOG" id="COG0085">
    <property type="taxonomic scope" value="Bacteria"/>
</dbReference>
<dbReference type="OrthoDB" id="9803954at2"/>
<dbReference type="Proteomes" id="UP000001817">
    <property type="component" value="Chromosome 1"/>
</dbReference>
<dbReference type="GO" id="GO:0000428">
    <property type="term" value="C:DNA-directed RNA polymerase complex"/>
    <property type="evidence" value="ECO:0007669"/>
    <property type="project" value="UniProtKB-KW"/>
</dbReference>
<dbReference type="GO" id="GO:0003677">
    <property type="term" value="F:DNA binding"/>
    <property type="evidence" value="ECO:0007669"/>
    <property type="project" value="UniProtKB-UniRule"/>
</dbReference>
<dbReference type="GO" id="GO:0003899">
    <property type="term" value="F:DNA-directed RNA polymerase activity"/>
    <property type="evidence" value="ECO:0007669"/>
    <property type="project" value="UniProtKB-UniRule"/>
</dbReference>
<dbReference type="GO" id="GO:0032549">
    <property type="term" value="F:ribonucleoside binding"/>
    <property type="evidence" value="ECO:0007669"/>
    <property type="project" value="InterPro"/>
</dbReference>
<dbReference type="GO" id="GO:0006351">
    <property type="term" value="P:DNA-templated transcription"/>
    <property type="evidence" value="ECO:0007669"/>
    <property type="project" value="UniProtKB-UniRule"/>
</dbReference>
<dbReference type="CDD" id="cd00653">
    <property type="entry name" value="RNA_pol_B_RPB2"/>
    <property type="match status" value="1"/>
</dbReference>
<dbReference type="FunFam" id="2.40.50.100:FF:000006">
    <property type="entry name" value="DNA-directed RNA polymerase subunit beta"/>
    <property type="match status" value="1"/>
</dbReference>
<dbReference type="FunFam" id="2.40.50.150:FF:000001">
    <property type="entry name" value="DNA-directed RNA polymerase subunit beta"/>
    <property type="match status" value="1"/>
</dbReference>
<dbReference type="FunFam" id="3.90.1110.10:FF:000004">
    <property type="entry name" value="DNA-directed RNA polymerase subunit beta"/>
    <property type="match status" value="1"/>
</dbReference>
<dbReference type="FunFam" id="3.90.1800.10:FF:000001">
    <property type="entry name" value="DNA-directed RNA polymerase subunit beta"/>
    <property type="match status" value="1"/>
</dbReference>
<dbReference type="Gene3D" id="2.40.50.100">
    <property type="match status" value="1"/>
</dbReference>
<dbReference type="Gene3D" id="2.40.50.150">
    <property type="match status" value="1"/>
</dbReference>
<dbReference type="Gene3D" id="3.90.1100.10">
    <property type="match status" value="2"/>
</dbReference>
<dbReference type="Gene3D" id="2.30.150.10">
    <property type="entry name" value="DNA-directed RNA polymerase, beta subunit, external 1 domain"/>
    <property type="match status" value="1"/>
</dbReference>
<dbReference type="Gene3D" id="2.40.270.10">
    <property type="entry name" value="DNA-directed RNA polymerase, subunit 2, domain 6"/>
    <property type="match status" value="1"/>
</dbReference>
<dbReference type="Gene3D" id="3.90.1800.10">
    <property type="entry name" value="RNA polymerase alpha subunit dimerisation domain"/>
    <property type="match status" value="1"/>
</dbReference>
<dbReference type="Gene3D" id="3.90.1110.10">
    <property type="entry name" value="RNA polymerase Rpb2, domain 2"/>
    <property type="match status" value="1"/>
</dbReference>
<dbReference type="HAMAP" id="MF_01321">
    <property type="entry name" value="RNApol_bact_RpoB"/>
    <property type="match status" value="1"/>
</dbReference>
<dbReference type="InterPro" id="IPR042107">
    <property type="entry name" value="DNA-dir_RNA_pol_bsu_ext_1_sf"/>
</dbReference>
<dbReference type="InterPro" id="IPR019462">
    <property type="entry name" value="DNA-dir_RNA_pol_bsu_external_1"/>
</dbReference>
<dbReference type="InterPro" id="IPR015712">
    <property type="entry name" value="DNA-dir_RNA_pol_su2"/>
</dbReference>
<dbReference type="InterPro" id="IPR007120">
    <property type="entry name" value="DNA-dir_RNAP_su2_dom"/>
</dbReference>
<dbReference type="InterPro" id="IPR037033">
    <property type="entry name" value="DNA-dir_RNAP_su2_hyb_sf"/>
</dbReference>
<dbReference type="InterPro" id="IPR010243">
    <property type="entry name" value="RNA_pol_bsu_bac"/>
</dbReference>
<dbReference type="InterPro" id="IPR007121">
    <property type="entry name" value="RNA_pol_bsu_CS"/>
</dbReference>
<dbReference type="InterPro" id="IPR007644">
    <property type="entry name" value="RNA_pol_bsu_protrusion"/>
</dbReference>
<dbReference type="InterPro" id="IPR007642">
    <property type="entry name" value="RNA_pol_Rpb2_2"/>
</dbReference>
<dbReference type="InterPro" id="IPR037034">
    <property type="entry name" value="RNA_pol_Rpb2_2_sf"/>
</dbReference>
<dbReference type="InterPro" id="IPR007645">
    <property type="entry name" value="RNA_pol_Rpb2_3"/>
</dbReference>
<dbReference type="InterPro" id="IPR007641">
    <property type="entry name" value="RNA_pol_Rpb2_7"/>
</dbReference>
<dbReference type="InterPro" id="IPR014724">
    <property type="entry name" value="RNA_pol_RPB2_OB-fold"/>
</dbReference>
<dbReference type="NCBIfam" id="NF001616">
    <property type="entry name" value="PRK00405.1"/>
    <property type="match status" value="1"/>
</dbReference>
<dbReference type="NCBIfam" id="TIGR02013">
    <property type="entry name" value="rpoB"/>
    <property type="match status" value="1"/>
</dbReference>
<dbReference type="PANTHER" id="PTHR20856">
    <property type="entry name" value="DNA-DIRECTED RNA POLYMERASE I SUBUNIT 2"/>
    <property type="match status" value="1"/>
</dbReference>
<dbReference type="Pfam" id="PF04563">
    <property type="entry name" value="RNA_pol_Rpb2_1"/>
    <property type="match status" value="1"/>
</dbReference>
<dbReference type="Pfam" id="PF04561">
    <property type="entry name" value="RNA_pol_Rpb2_2"/>
    <property type="match status" value="2"/>
</dbReference>
<dbReference type="Pfam" id="PF04565">
    <property type="entry name" value="RNA_pol_Rpb2_3"/>
    <property type="match status" value="1"/>
</dbReference>
<dbReference type="Pfam" id="PF10385">
    <property type="entry name" value="RNA_pol_Rpb2_45"/>
    <property type="match status" value="1"/>
</dbReference>
<dbReference type="Pfam" id="PF00562">
    <property type="entry name" value="RNA_pol_Rpb2_6"/>
    <property type="match status" value="1"/>
</dbReference>
<dbReference type="Pfam" id="PF04560">
    <property type="entry name" value="RNA_pol_Rpb2_7"/>
    <property type="match status" value="1"/>
</dbReference>
<dbReference type="SUPFAM" id="SSF64484">
    <property type="entry name" value="beta and beta-prime subunits of DNA dependent RNA-polymerase"/>
    <property type="match status" value="1"/>
</dbReference>
<dbReference type="PROSITE" id="PS01166">
    <property type="entry name" value="RNA_POL_BETA"/>
    <property type="match status" value="1"/>
</dbReference>